<evidence type="ECO:0000255" key="1">
    <source>
        <dbReference type="HAMAP-Rule" id="MF_01207"/>
    </source>
</evidence>
<keyword id="KW-0997">Cell inner membrane</keyword>
<keyword id="KW-1003">Cell membrane</keyword>
<keyword id="KW-0249">Electron transport</keyword>
<keyword id="KW-0285">Flavoprotein</keyword>
<keyword id="KW-0288">FMN</keyword>
<keyword id="KW-0349">Heme</keyword>
<keyword id="KW-0408">Iron</keyword>
<keyword id="KW-0472">Membrane</keyword>
<keyword id="KW-0479">Metal-binding</keyword>
<keyword id="KW-0812">Transmembrane</keyword>
<keyword id="KW-1133">Transmembrane helix</keyword>
<keyword id="KW-0813">Transport</keyword>
<proteinExistence type="inferred from homology"/>
<dbReference type="EMBL" id="CP001657">
    <property type="protein sequence ID" value="ACT11306.1"/>
    <property type="molecule type" value="Genomic_DNA"/>
</dbReference>
<dbReference type="RefSeq" id="WP_012772971.1">
    <property type="nucleotide sequence ID" value="NC_012917.1"/>
</dbReference>
<dbReference type="SMR" id="C6DIK6"/>
<dbReference type="STRING" id="561230.PC1_0246"/>
<dbReference type="KEGG" id="pct:PC1_0246"/>
<dbReference type="eggNOG" id="COG2717">
    <property type="taxonomic scope" value="Bacteria"/>
</dbReference>
<dbReference type="HOGENOM" id="CLU_080662_1_0_6"/>
<dbReference type="OrthoDB" id="9788328at2"/>
<dbReference type="Proteomes" id="UP000002736">
    <property type="component" value="Chromosome"/>
</dbReference>
<dbReference type="GO" id="GO:0005886">
    <property type="term" value="C:plasma membrane"/>
    <property type="evidence" value="ECO:0007669"/>
    <property type="project" value="UniProtKB-SubCell"/>
</dbReference>
<dbReference type="GO" id="GO:0009055">
    <property type="term" value="F:electron transfer activity"/>
    <property type="evidence" value="ECO:0007669"/>
    <property type="project" value="UniProtKB-UniRule"/>
</dbReference>
<dbReference type="GO" id="GO:0010181">
    <property type="term" value="F:FMN binding"/>
    <property type="evidence" value="ECO:0007669"/>
    <property type="project" value="UniProtKB-UniRule"/>
</dbReference>
<dbReference type="GO" id="GO:0020037">
    <property type="term" value="F:heme binding"/>
    <property type="evidence" value="ECO:0007669"/>
    <property type="project" value="UniProtKB-UniRule"/>
</dbReference>
<dbReference type="GO" id="GO:0046872">
    <property type="term" value="F:metal ion binding"/>
    <property type="evidence" value="ECO:0007669"/>
    <property type="project" value="UniProtKB-KW"/>
</dbReference>
<dbReference type="GO" id="GO:0016679">
    <property type="term" value="F:oxidoreductase activity, acting on diphenols and related substances as donors"/>
    <property type="evidence" value="ECO:0007669"/>
    <property type="project" value="TreeGrafter"/>
</dbReference>
<dbReference type="GO" id="GO:0030091">
    <property type="term" value="P:protein repair"/>
    <property type="evidence" value="ECO:0007669"/>
    <property type="project" value="UniProtKB-UniRule"/>
</dbReference>
<dbReference type="HAMAP" id="MF_01207">
    <property type="entry name" value="MsrQ"/>
    <property type="match status" value="1"/>
</dbReference>
<dbReference type="InterPro" id="IPR013130">
    <property type="entry name" value="Fe3_Rdtase_TM_dom"/>
</dbReference>
<dbReference type="InterPro" id="IPR022837">
    <property type="entry name" value="MsrQ-like"/>
</dbReference>
<dbReference type="NCBIfam" id="NF003832">
    <property type="entry name" value="PRK05419.1-4"/>
    <property type="match status" value="1"/>
</dbReference>
<dbReference type="PANTHER" id="PTHR36964">
    <property type="entry name" value="PROTEIN-METHIONINE-SULFOXIDE REDUCTASE HEME-BINDING SUBUNIT MSRQ"/>
    <property type="match status" value="1"/>
</dbReference>
<dbReference type="PANTHER" id="PTHR36964:SF1">
    <property type="entry name" value="PROTEIN-METHIONINE-SULFOXIDE REDUCTASE HEME-BINDING SUBUNIT MSRQ"/>
    <property type="match status" value="1"/>
</dbReference>
<dbReference type="Pfam" id="PF01794">
    <property type="entry name" value="Ferric_reduct"/>
    <property type="match status" value="1"/>
</dbReference>
<sequence length="199" mass="23086">MRLTLQHITRLKVLLHLAGFLPLLWLILSVDQGWFSADPAKDIQHFTGRMALKLLLATLLVTPLARYGKQPLLIRCRRLLGLWCFFWATLHLVSYALLELGLDHLALLGKELISRPYLTLGVISWLILLALAVTSPQIMMRKLGSQWQKLHNFVYLVAILAPIHYLWSVKTLSPQPILYALAALILLLFRYKKFRQWWR</sequence>
<accession>C6DIK6</accession>
<name>MSRQ_PECCP</name>
<feature type="chain" id="PRO_1000213853" description="Protein-methionine-sulfoxide reductase heme-binding subunit MsrQ">
    <location>
        <begin position="1"/>
        <end position="199"/>
    </location>
</feature>
<feature type="transmembrane region" description="Helical" evidence="1">
    <location>
        <begin position="13"/>
        <end position="33"/>
    </location>
</feature>
<feature type="transmembrane region" description="Helical" evidence="1">
    <location>
        <begin position="79"/>
        <end position="99"/>
    </location>
</feature>
<feature type="transmembrane region" description="Helical" evidence="1">
    <location>
        <begin position="120"/>
        <end position="140"/>
    </location>
</feature>
<feature type="transmembrane region" description="Helical" evidence="1">
    <location>
        <begin position="147"/>
        <end position="167"/>
    </location>
</feature>
<feature type="transmembrane region" description="Helical" evidence="1">
    <location>
        <begin position="169"/>
        <end position="189"/>
    </location>
</feature>
<comment type="function">
    <text evidence="1">Part of the MsrPQ system that repairs oxidized periplasmic proteins containing methionine sulfoxide residues (Met-O), using respiratory chain electrons. Thus protects these proteins from oxidative-stress damage caused by reactive species of oxygen and chlorine generated by the host defense mechanisms. MsrPQ is essential for the maintenance of envelope integrity under bleach stress, rescuing a wide series of structurally unrelated periplasmic proteins from methionine oxidation. MsrQ provides electrons for reduction to the reductase catalytic subunit MsrP, using the quinone pool of the respiratory chain.</text>
</comment>
<comment type="cofactor">
    <cofactor evidence="1">
        <name>FMN</name>
        <dbReference type="ChEBI" id="CHEBI:58210"/>
    </cofactor>
    <text evidence="1">Binds 1 FMN per subunit.</text>
</comment>
<comment type="cofactor">
    <cofactor evidence="1">
        <name>heme b</name>
        <dbReference type="ChEBI" id="CHEBI:60344"/>
    </cofactor>
    <text evidence="1">Binds 1 heme b (iron(II)-protoporphyrin IX) group per subunit.</text>
</comment>
<comment type="subunit">
    <text evidence="1">Heterodimer of a catalytic subunit (MsrP) and a heme-binding subunit (MsrQ).</text>
</comment>
<comment type="subcellular location">
    <subcellularLocation>
        <location evidence="1">Cell inner membrane</location>
        <topology evidence="1">Multi-pass membrane protein</topology>
    </subcellularLocation>
</comment>
<comment type="similarity">
    <text evidence="1">Belongs to the MsrQ family.</text>
</comment>
<reference key="1">
    <citation type="submission" date="2009-07" db="EMBL/GenBank/DDBJ databases">
        <title>Complete sequence of Pectobacterium carotovorum subsp. carotovorum PC1.</title>
        <authorList>
            <consortium name="US DOE Joint Genome Institute"/>
            <person name="Lucas S."/>
            <person name="Copeland A."/>
            <person name="Lapidus A."/>
            <person name="Glavina del Rio T."/>
            <person name="Tice H."/>
            <person name="Bruce D."/>
            <person name="Goodwin L."/>
            <person name="Pitluck S."/>
            <person name="Munk A.C."/>
            <person name="Brettin T."/>
            <person name="Detter J.C."/>
            <person name="Han C."/>
            <person name="Tapia R."/>
            <person name="Larimer F."/>
            <person name="Land M."/>
            <person name="Hauser L."/>
            <person name="Kyrpides N."/>
            <person name="Mikhailova N."/>
            <person name="Balakrishnan V."/>
            <person name="Glasner J."/>
            <person name="Perna N.T."/>
        </authorList>
    </citation>
    <scope>NUCLEOTIDE SEQUENCE [LARGE SCALE GENOMIC DNA]</scope>
    <source>
        <strain>PC1</strain>
    </source>
</reference>
<organism>
    <name type="scientific">Pectobacterium carotovorum subsp. carotovorum (strain PC1)</name>
    <dbReference type="NCBI Taxonomy" id="561230"/>
    <lineage>
        <taxon>Bacteria</taxon>
        <taxon>Pseudomonadati</taxon>
        <taxon>Pseudomonadota</taxon>
        <taxon>Gammaproteobacteria</taxon>
        <taxon>Enterobacterales</taxon>
        <taxon>Pectobacteriaceae</taxon>
        <taxon>Pectobacterium</taxon>
    </lineage>
</organism>
<gene>
    <name evidence="1" type="primary">msrQ</name>
    <name type="ordered locus">PC1_0246</name>
</gene>
<protein>
    <recommendedName>
        <fullName evidence="1">Protein-methionine-sulfoxide reductase heme-binding subunit MsrQ</fullName>
    </recommendedName>
    <alternativeName>
        <fullName evidence="1">Flavocytochrome MsrQ</fullName>
    </alternativeName>
</protein>